<accession>A0A1B2CTA9</accession>
<keyword id="KW-0521">NADP</keyword>
<keyword id="KW-0560">Oxidoreductase</keyword>
<name>PEND_PENTH</name>
<organism>
    <name type="scientific">Penicillium thymicola</name>
    <dbReference type="NCBI Taxonomy" id="293382"/>
    <lineage>
        <taxon>Eukaryota</taxon>
        <taxon>Fungi</taxon>
        <taxon>Dikarya</taxon>
        <taxon>Ascomycota</taxon>
        <taxon>Pezizomycotina</taxon>
        <taxon>Eurotiomycetes</taxon>
        <taxon>Eurotiomycetidae</taxon>
        <taxon>Eurotiales</taxon>
        <taxon>Aspergillaceae</taxon>
        <taxon>Penicillium</taxon>
    </lineage>
</organism>
<proteinExistence type="evidence at protein level"/>
<gene>
    <name evidence="9" type="primary">penD</name>
</gene>
<dbReference type="EC" id="1.1.1.-" evidence="8"/>
<dbReference type="EMBL" id="KX528209">
    <property type="protein sequence ID" value="ANY57882.1"/>
    <property type="molecule type" value="Genomic_DNA"/>
</dbReference>
<dbReference type="SMR" id="A0A1B2CTA9"/>
<dbReference type="BioCyc" id="MetaCyc:MONOMER-124190"/>
<dbReference type="GO" id="GO:0016614">
    <property type="term" value="F:oxidoreductase activity, acting on CH-OH group of donors"/>
    <property type="evidence" value="ECO:0007669"/>
    <property type="project" value="UniProtKB-ARBA"/>
</dbReference>
<dbReference type="GO" id="GO:0044550">
    <property type="term" value="P:secondary metabolite biosynthetic process"/>
    <property type="evidence" value="ECO:0007669"/>
    <property type="project" value="UniProtKB-ARBA"/>
</dbReference>
<dbReference type="CDD" id="cd05233">
    <property type="entry name" value="SDR_c"/>
    <property type="match status" value="1"/>
</dbReference>
<dbReference type="Gene3D" id="3.40.50.720">
    <property type="entry name" value="NAD(P)-binding Rossmann-like Domain"/>
    <property type="match status" value="1"/>
</dbReference>
<dbReference type="InterPro" id="IPR036291">
    <property type="entry name" value="NAD(P)-bd_dom_sf"/>
</dbReference>
<dbReference type="InterPro" id="IPR020904">
    <property type="entry name" value="Sc_DH/Rdtase_CS"/>
</dbReference>
<dbReference type="InterPro" id="IPR002347">
    <property type="entry name" value="SDR_fam"/>
</dbReference>
<dbReference type="PANTHER" id="PTHR48107">
    <property type="entry name" value="NADPH-DEPENDENT ALDEHYDE REDUCTASE-LIKE PROTEIN, CHLOROPLASTIC-RELATED"/>
    <property type="match status" value="1"/>
</dbReference>
<dbReference type="PANTHER" id="PTHR48107:SF7">
    <property type="entry name" value="RE15974P"/>
    <property type="match status" value="1"/>
</dbReference>
<dbReference type="Pfam" id="PF13561">
    <property type="entry name" value="adh_short_C2"/>
    <property type="match status" value="1"/>
</dbReference>
<dbReference type="PRINTS" id="PR00081">
    <property type="entry name" value="GDHRDH"/>
</dbReference>
<dbReference type="PRINTS" id="PR00080">
    <property type="entry name" value="SDRFAMILY"/>
</dbReference>
<dbReference type="SUPFAM" id="SSF51735">
    <property type="entry name" value="NAD(P)-binding Rossmann-fold domains"/>
    <property type="match status" value="1"/>
</dbReference>
<dbReference type="PROSITE" id="PS00061">
    <property type="entry name" value="ADH_SHORT"/>
    <property type="match status" value="1"/>
</dbReference>
<feature type="chain" id="PRO_0000455357" description="Short chain dehydrogenase penD">
    <location>
        <begin position="1"/>
        <end position="277"/>
    </location>
</feature>
<feature type="active site" description="Proton donor" evidence="3">
    <location>
        <position position="158"/>
    </location>
</feature>
<feature type="active site" description="Proton donor" evidence="3">
    <location>
        <position position="159"/>
    </location>
</feature>
<feature type="active site" description="Proton acceptor" evidence="6">
    <location>
        <position position="173"/>
    </location>
</feature>
<feature type="active site" description="Lowers pKa of active site Tyr" evidence="3">
    <location>
        <position position="177"/>
    </location>
</feature>
<feature type="binding site" evidence="2">
    <location>
        <position position="28"/>
    </location>
    <ligand>
        <name>NADP(+)</name>
        <dbReference type="ChEBI" id="CHEBI:58349"/>
    </ligand>
</feature>
<feature type="binding site" evidence="2">
    <location>
        <position position="76"/>
    </location>
    <ligand>
        <name>NADP(+)</name>
        <dbReference type="ChEBI" id="CHEBI:58349"/>
    </ligand>
</feature>
<feature type="binding site" evidence="3">
    <location>
        <position position="105"/>
    </location>
    <ligand>
        <name>NADP(+)</name>
        <dbReference type="ChEBI" id="CHEBI:58349"/>
    </ligand>
</feature>
<feature type="binding site" evidence="3">
    <location>
        <position position="173"/>
    </location>
    <ligand>
        <name>NADP(+)</name>
        <dbReference type="ChEBI" id="CHEBI:58349"/>
    </ligand>
</feature>
<feature type="binding site" evidence="3">
    <location>
        <position position="177"/>
    </location>
    <ligand>
        <name>NADP(+)</name>
        <dbReference type="ChEBI" id="CHEBI:58349"/>
    </ligand>
</feature>
<feature type="binding site" evidence="2">
    <location>
        <position position="209"/>
    </location>
    <ligand>
        <name>NADP(+)</name>
        <dbReference type="ChEBI" id="CHEBI:58349"/>
    </ligand>
</feature>
<reference key="1">
    <citation type="journal article" date="2015" name="J. Am. Chem. Soc.">
        <title>Tandem prenyltransferases catalyze isoprenoid elongation and complexity generation in biosynthesis of quinolone alkaloids.</title>
        <authorList>
            <person name="Zou Y."/>
            <person name="Zhan Z."/>
            <person name="Li D."/>
            <person name="Tang M."/>
            <person name="Cacho R.A."/>
            <person name="Watanabe K."/>
            <person name="Tang Y."/>
        </authorList>
    </citation>
    <scope>NUCLEOTIDE SEQUENCE [GENOMIC DNA]</scope>
    <scope>FUNCTION</scope>
    <scope>PATHWAY</scope>
    <source>
        <strain>IBT 5891 / CBS 111225</strain>
    </source>
</reference>
<reference key="2">
    <citation type="journal article" date="2017" name="Nat. Chem. Biol.">
        <title>Enzyme-catalyzed cationic epoxide rearrangements in quinolone alkaloid biosynthesis.</title>
        <authorList>
            <person name="Zou Y."/>
            <person name="Garcia-Borras M."/>
            <person name="Tang M.C."/>
            <person name="Hirayama Y."/>
            <person name="Li D.H."/>
            <person name="Li L."/>
            <person name="Watanabe K."/>
            <person name="Houk K.N."/>
            <person name="Tang Y."/>
        </authorList>
    </citation>
    <scope>FUNCTION</scope>
    <scope>CATALYTIC ACTIVITY</scope>
    <scope>PATHWAY</scope>
</reference>
<sequence length="277" mass="29008">MPLSSKVSQAPWSLTGKTAVVTGGSRGIGRAIAIHLARKGVRKLAITYVRDLASAESALEEIRKEGIETGIAIQADILNASVGRDLIAQALVGLETSTIDILVNNAALLDPINTPSVEDVTLENFQELMQANCFAPVSIINACMPHLPPSGGRVINISSVASKTPNPGTIVTYGASKAALDSYTRSMAGLFAKDKTATFNTVCVGPTVTDSFRAVSQLYPGEFIKEVAKSFTAADRVGVPEDIAYIVGFLASEEGRWMNGACVSANGGLREALPALS</sequence>
<evidence type="ECO:0000250" key="1">
    <source>
        <dbReference type="UniProtKB" id="C8VJQ3"/>
    </source>
</evidence>
<evidence type="ECO:0000250" key="2">
    <source>
        <dbReference type="UniProtKB" id="L0E2Z4"/>
    </source>
</evidence>
<evidence type="ECO:0000250" key="3">
    <source>
        <dbReference type="UniProtKB" id="O93868"/>
    </source>
</evidence>
<evidence type="ECO:0000250" key="4">
    <source>
        <dbReference type="UniProtKB" id="Q5AR53"/>
    </source>
</evidence>
<evidence type="ECO:0000250" key="5">
    <source>
        <dbReference type="UniProtKB" id="Q5AR54"/>
    </source>
</evidence>
<evidence type="ECO:0000255" key="6">
    <source>
        <dbReference type="PROSITE-ProRule" id="PRU10001"/>
    </source>
</evidence>
<evidence type="ECO:0000269" key="7">
    <source>
    </source>
</evidence>
<evidence type="ECO:0000269" key="8">
    <source>
    </source>
</evidence>
<evidence type="ECO:0000303" key="9">
    <source>
    </source>
</evidence>
<evidence type="ECO:0000305" key="10"/>
<evidence type="ECO:0000305" key="11">
    <source>
    </source>
</evidence>
<comment type="function">
    <text evidence="1 4 5 7 8 11">Short chain dehydrogenase; part of the gene cluster that mediates the biosynthesis of penigequinolones, potent insecticidal alkaloids that contain a highly modified 10-carbon prenyl group (PubMed:25859931, PubMed:28114276). The first stage is catalyzed by the nonribosomal peptide synthetase penN that condenses anthranilic acid and O-methyl-L-tyrosine to produce 4'-methoxycyclopeptin (By similarity). 4'-methoxycyclopeptin is then converted to 4'-methoxydehydrocyclopeptin by the ketoglutarate-dependent dioxygenase penM through dehydrogenation to form a double bond between C-alpha and C-beta of the O-methyltyrosine side chain (By similarity). PenM also converts its first product methoxydehydrocyclopeptin to 4'-methoxycyclopenin (By similarity). The following conversion of 4'methoxycyclopenin into 4'-methoxyviridicatin is catalyzed by the cyclopenase penL (By similarity). 4'-methoxyviridicatin is the precursor of quinolone natural products, and is further converted to quinolinone B (Probable). The prenyltransferase penI then catalyzes the canonical Friedel-Crafts alkylation of quinolinone B with dimethylallyl cation to yield dimethylallyl quinolone, which is subjected to FAD-dependent dehydrogenation by the FAD-linked oxidoreductase penH to yield conjugated aryl diene (PubMed:25859931). The delta(3') double bond then serves as the site of the second alkylation with DMAPP catalyzed by the prenyltransferase penG to yield a carbenium ion intermediate, which can be attacked by H(2)O to yield a styrenyl quinolone containing a C3'-hydroxyprenyl chain, or undergo cyclization to yield yaequinolones J1 and J2 (PubMed:25859931). The conversion of the styrenyl quinolone into the tetrahydrofuran-containing yaequinolone C is performed by the FAD-dependent monooxygenase penE and involves epoxidation of the terminal C7'-C8' olefin, followed by epoxide ring opening initiated by the C3' hydroxyl group (PubMed:25859931). The predicted cysteine hydrolase penJ acts as an epoxide hydrolase that enhances the rate of the 5-exo-tet cyclization step, increasing the yield of yaequinolone C (PubMed:25859931, PubMed:28114276). PenF catalyzes the cationic rearrangement of the epoxide formed by penE (before ring opening to produce yaequinolone C) into yaequinolone D (PubMed:28114276). Finally, the short-chain dehydrogenase/reductase (SDR)-like reductase penD, catalyzes both the dehydration of yaequinolone D and the reduction of the resulting oxonium to yield penigequinolone (PubMed:28114276).</text>
</comment>
<comment type="catalytic activity">
    <reaction evidence="8">
        <text>yaequinolone D + NADPH + H(+) = penigequinolone A + NADP(+) + H2O</text>
        <dbReference type="Rhea" id="RHEA:74499"/>
        <dbReference type="ChEBI" id="CHEBI:15377"/>
        <dbReference type="ChEBI" id="CHEBI:15378"/>
        <dbReference type="ChEBI" id="CHEBI:57783"/>
        <dbReference type="ChEBI" id="CHEBI:58349"/>
        <dbReference type="ChEBI" id="CHEBI:193558"/>
        <dbReference type="ChEBI" id="CHEBI:193559"/>
    </reaction>
    <physiologicalReaction direction="left-to-right" evidence="8">
        <dbReference type="Rhea" id="RHEA:74500"/>
    </physiologicalReaction>
</comment>
<comment type="catalytic activity">
    <reaction evidence="8">
        <text>yaequinolone D + NADPH + H(+) = penigequinolone B + NADP(+) + H2O</text>
        <dbReference type="Rhea" id="RHEA:74503"/>
        <dbReference type="ChEBI" id="CHEBI:15377"/>
        <dbReference type="ChEBI" id="CHEBI:15378"/>
        <dbReference type="ChEBI" id="CHEBI:57783"/>
        <dbReference type="ChEBI" id="CHEBI:58349"/>
        <dbReference type="ChEBI" id="CHEBI:193558"/>
        <dbReference type="ChEBI" id="CHEBI:193560"/>
    </reaction>
    <physiologicalReaction direction="left-to-right" evidence="8">
        <dbReference type="Rhea" id="RHEA:74504"/>
    </physiologicalReaction>
</comment>
<comment type="pathway">
    <text evidence="8">Secondary metabolite biosynthesis.</text>
</comment>
<comment type="pathway">
    <text evidence="8">Alkaloid biosynthesis.</text>
</comment>
<comment type="pathway">
    <text evidence="8">Mycotoxin biosynthesis.</text>
</comment>
<comment type="similarity">
    <text evidence="10">Belongs to the short-chain dehydrogenases/reductases (SDR) family.</text>
</comment>
<protein>
    <recommendedName>
        <fullName evidence="9">Short chain dehydrogenase penD</fullName>
        <ecNumber evidence="8">1.1.1.-</ecNumber>
    </recommendedName>
    <alternativeName>
        <fullName evidence="9">Penigequinolones biosynthesis cluster protein D</fullName>
    </alternativeName>
</protein>